<evidence type="ECO:0000255" key="1">
    <source>
        <dbReference type="HAMAP-Rule" id="MF_00700"/>
    </source>
</evidence>
<comment type="function">
    <text evidence="1">Catalytic subunit of DNA primase, an RNA polymerase that catalyzes the synthesis of short RNA molecules used as primers for DNA polymerase during DNA replication. The small subunit contains the primase catalytic core and has DNA synthesis activity on its own. Binding to the large subunit stabilizes and modulates the activity, increasing the rate of DNA synthesis while decreasing the length of the DNA fragments, and conferring RNA synthesis capability. The DNA polymerase activity may enable DNA primase to also catalyze primer extension after primer synthesis. May also play a role in DNA repair.</text>
</comment>
<comment type="cofactor">
    <cofactor evidence="1">
        <name>Mg(2+)</name>
        <dbReference type="ChEBI" id="CHEBI:18420"/>
    </cofactor>
    <cofactor evidence="1">
        <name>Mn(2+)</name>
        <dbReference type="ChEBI" id="CHEBI:29035"/>
    </cofactor>
</comment>
<comment type="subunit">
    <text evidence="1">Heterodimer of a small subunit (PriS) and a large subunit (PriL).</text>
</comment>
<comment type="similarity">
    <text evidence="1">Belongs to the eukaryotic-type primase small subunit family.</text>
</comment>
<name>PRIS_STAMF</name>
<reference key="1">
    <citation type="journal article" date="2009" name="BMC Genomics">
        <title>The complete genome sequence of Staphylothermus marinus reveals differences in sulfur metabolism among heterotrophic Crenarchaeota.</title>
        <authorList>
            <person name="Anderson I.J."/>
            <person name="Dharmarajan L."/>
            <person name="Rodriguez J."/>
            <person name="Hooper S."/>
            <person name="Porat I."/>
            <person name="Ulrich L.E."/>
            <person name="Elkins J.G."/>
            <person name="Mavromatis K."/>
            <person name="Sun H."/>
            <person name="Land M."/>
            <person name="Lapidus A."/>
            <person name="Lucas S."/>
            <person name="Barry K."/>
            <person name="Huber H."/>
            <person name="Zhulin I.B."/>
            <person name="Whitman W.B."/>
            <person name="Mukhopadhyay B."/>
            <person name="Woese C."/>
            <person name="Bristow J."/>
            <person name="Kyrpides N."/>
        </authorList>
    </citation>
    <scope>NUCLEOTIDE SEQUENCE [LARGE SCALE GENOMIC DNA]</scope>
    <source>
        <strain>ATCC 43588 / DSM 3639 / JCM 9404 / F1</strain>
    </source>
</reference>
<reference key="2">
    <citation type="journal article" date="2009" name="Stand. Genomic Sci.">
        <title>Complete genome sequence of Staphylothermus marinus Stetter and Fiala 1986 type strain F1.</title>
        <authorList>
            <person name="Anderson I.J."/>
            <person name="Sun H."/>
            <person name="Lapidus A."/>
            <person name="Copeland A."/>
            <person name="Glavina Del Rio T."/>
            <person name="Tice H."/>
            <person name="Dalin E."/>
            <person name="Lucas S."/>
            <person name="Barry K."/>
            <person name="Land M."/>
            <person name="Richardson P."/>
            <person name="Huber H."/>
            <person name="Kyrpides N.C."/>
        </authorList>
    </citation>
    <scope>NUCLEOTIDE SEQUENCE [LARGE SCALE GENOMIC DNA]</scope>
    <source>
        <strain>ATCC 43588 / DSM 3639 / JCM 9404 / F1</strain>
    </source>
</reference>
<feature type="chain" id="PRO_1000132348" description="DNA primase small subunit PriS">
    <location>
        <begin position="1"/>
        <end position="377"/>
    </location>
</feature>
<feature type="active site" evidence="1">
    <location>
        <position position="99"/>
    </location>
</feature>
<feature type="active site" evidence="1">
    <location>
        <position position="101"/>
    </location>
</feature>
<feature type="active site" evidence="1">
    <location>
        <position position="274"/>
    </location>
</feature>
<proteinExistence type="inferred from homology"/>
<keyword id="KW-0235">DNA replication</keyword>
<keyword id="KW-0240">DNA-directed RNA polymerase</keyword>
<keyword id="KW-0460">Magnesium</keyword>
<keyword id="KW-0464">Manganese</keyword>
<keyword id="KW-0479">Metal-binding</keyword>
<keyword id="KW-0548">Nucleotidyltransferase</keyword>
<keyword id="KW-0639">Primosome</keyword>
<keyword id="KW-1185">Reference proteome</keyword>
<keyword id="KW-0804">Transcription</keyword>
<keyword id="KW-0808">Transferase</keyword>
<gene>
    <name evidence="1" type="primary">priS</name>
    <name type="synonym">priA</name>
    <name type="ordered locus">Smar_0639</name>
</gene>
<dbReference type="EC" id="2.7.7.-" evidence="1"/>
<dbReference type="EMBL" id="CP000575">
    <property type="protein sequence ID" value="ABN69745.1"/>
    <property type="molecule type" value="Genomic_DNA"/>
</dbReference>
<dbReference type="RefSeq" id="WP_011838936.1">
    <property type="nucleotide sequence ID" value="NC_009033.1"/>
</dbReference>
<dbReference type="SMR" id="A3DM85"/>
<dbReference type="STRING" id="399550.Smar_0639"/>
<dbReference type="GeneID" id="4907381"/>
<dbReference type="KEGG" id="smr:Smar_0639"/>
<dbReference type="eggNOG" id="arCOG04110">
    <property type="taxonomic scope" value="Archaea"/>
</dbReference>
<dbReference type="HOGENOM" id="CLU_056123_0_0_2"/>
<dbReference type="OrthoDB" id="31125at2157"/>
<dbReference type="Proteomes" id="UP000000254">
    <property type="component" value="Chromosome"/>
</dbReference>
<dbReference type="GO" id="GO:0000428">
    <property type="term" value="C:DNA-directed RNA polymerase complex"/>
    <property type="evidence" value="ECO:0007669"/>
    <property type="project" value="UniProtKB-KW"/>
</dbReference>
<dbReference type="GO" id="GO:1990077">
    <property type="term" value="C:primosome complex"/>
    <property type="evidence" value="ECO:0007669"/>
    <property type="project" value="UniProtKB-KW"/>
</dbReference>
<dbReference type="GO" id="GO:0003899">
    <property type="term" value="F:DNA-directed RNA polymerase activity"/>
    <property type="evidence" value="ECO:0007669"/>
    <property type="project" value="InterPro"/>
</dbReference>
<dbReference type="GO" id="GO:0046872">
    <property type="term" value="F:metal ion binding"/>
    <property type="evidence" value="ECO:0007669"/>
    <property type="project" value="UniProtKB-KW"/>
</dbReference>
<dbReference type="GO" id="GO:0006269">
    <property type="term" value="P:DNA replication, synthesis of primer"/>
    <property type="evidence" value="ECO:0007669"/>
    <property type="project" value="UniProtKB-UniRule"/>
</dbReference>
<dbReference type="CDD" id="cd04860">
    <property type="entry name" value="AE_Prim_S"/>
    <property type="match status" value="1"/>
</dbReference>
<dbReference type="Gene3D" id="3.90.920.10">
    <property type="entry name" value="DNA primase, PRIM domain"/>
    <property type="match status" value="1"/>
</dbReference>
<dbReference type="HAMAP" id="MF_00700">
    <property type="entry name" value="DNA_primase_sml_arc"/>
    <property type="match status" value="1"/>
</dbReference>
<dbReference type="InterPro" id="IPR002755">
    <property type="entry name" value="DNA_primase_S"/>
</dbReference>
<dbReference type="InterPro" id="IPR014052">
    <property type="entry name" value="DNA_primase_ssu_euk/arc"/>
</dbReference>
<dbReference type="InterPro" id="IPR023639">
    <property type="entry name" value="DNA_primase_ssu_PriS"/>
</dbReference>
<dbReference type="PANTHER" id="PTHR10536">
    <property type="entry name" value="DNA PRIMASE SMALL SUBUNIT"/>
    <property type="match status" value="1"/>
</dbReference>
<dbReference type="Pfam" id="PF01896">
    <property type="entry name" value="DNA_primase_S"/>
    <property type="match status" value="1"/>
</dbReference>
<dbReference type="Pfam" id="PF20873">
    <property type="entry name" value="PriS_C"/>
    <property type="match status" value="1"/>
</dbReference>
<dbReference type="SUPFAM" id="SSF56747">
    <property type="entry name" value="Prim-pol domain"/>
    <property type="match status" value="1"/>
</dbReference>
<sequence length="377" mass="43866">MSRQESSNKFFIKKILREYYSRKPLEEPLYIHKREIAIHSLEDEAYIRHLSFPSITHLYNFILNEKTPLHLYYSSAYYESPSVNKMELKGWIGSDLMFDLDSDHYPGCDKILSICIEENTIYDGKIKTCPKTESKPVIHPLIKTECIQKAYRDALRIKYILEDELGLKNIKIYFSGNRGFHVKVIDEKIWDLESDERREIASYISLENFDINKLFPVIGKRKKYVIITRNEHGIRKRVLDYVIKNNIVNGNELFIKLPLKLLEETINDLTIPIDIVVTMDISRLSRFGNSINGKSGLITKLIEPLDNYEFDINDFCPWSGNIVVKPLIDISGLQVFDEKIDLKRGVKKILDSKIAVYLTLKGIVKIISDEKLVIKNV</sequence>
<accession>A3DM85</accession>
<protein>
    <recommendedName>
        <fullName evidence="1">DNA primase small subunit PriS</fullName>
        <ecNumber evidence="1">2.7.7.-</ecNumber>
    </recommendedName>
</protein>
<organism>
    <name type="scientific">Staphylothermus marinus (strain ATCC 43588 / DSM 3639 / JCM 9404 / F1)</name>
    <dbReference type="NCBI Taxonomy" id="399550"/>
    <lineage>
        <taxon>Archaea</taxon>
        <taxon>Thermoproteota</taxon>
        <taxon>Thermoprotei</taxon>
        <taxon>Desulfurococcales</taxon>
        <taxon>Desulfurococcaceae</taxon>
        <taxon>Staphylothermus</taxon>
    </lineage>
</organism>